<comment type="function">
    <text evidence="1">Catalyzes the attachment of tyrosine to tRNA(Tyr) in a two-step reaction: tyrosine is first activated by ATP to form Tyr-AMP and then transferred to the acceptor end of tRNA(Tyr).</text>
</comment>
<comment type="catalytic activity">
    <reaction evidence="1">
        <text>tRNA(Tyr) + L-tyrosine + ATP = L-tyrosyl-tRNA(Tyr) + AMP + diphosphate + H(+)</text>
        <dbReference type="Rhea" id="RHEA:10220"/>
        <dbReference type="Rhea" id="RHEA-COMP:9706"/>
        <dbReference type="Rhea" id="RHEA-COMP:9707"/>
        <dbReference type="ChEBI" id="CHEBI:15378"/>
        <dbReference type="ChEBI" id="CHEBI:30616"/>
        <dbReference type="ChEBI" id="CHEBI:33019"/>
        <dbReference type="ChEBI" id="CHEBI:58315"/>
        <dbReference type="ChEBI" id="CHEBI:78442"/>
        <dbReference type="ChEBI" id="CHEBI:78536"/>
        <dbReference type="ChEBI" id="CHEBI:456215"/>
        <dbReference type="EC" id="6.1.1.1"/>
    </reaction>
</comment>
<comment type="subunit">
    <text evidence="1">Homodimer.</text>
</comment>
<comment type="subcellular location">
    <subcellularLocation>
        <location evidence="1">Cytoplasm</location>
    </subcellularLocation>
</comment>
<comment type="similarity">
    <text evidence="1">Belongs to the class-I aminoacyl-tRNA synthetase family. TyrS type 1 subfamily.</text>
</comment>
<protein>
    <recommendedName>
        <fullName evidence="1">Tyrosine--tRNA ligase</fullName>
        <ecNumber evidence="1">6.1.1.1</ecNumber>
    </recommendedName>
    <alternativeName>
        <fullName evidence="1">Tyrosyl-tRNA synthetase</fullName>
        <shortName evidence="1">TyrRS</shortName>
    </alternativeName>
</protein>
<name>SYY_CALS4</name>
<accession>Q8R6V5</accession>
<dbReference type="EC" id="6.1.1.1" evidence="1"/>
<dbReference type="EMBL" id="AE008691">
    <property type="protein sequence ID" value="AAM25798.1"/>
    <property type="molecule type" value="Genomic_DNA"/>
</dbReference>
<dbReference type="RefSeq" id="WP_011026671.1">
    <property type="nucleotide sequence ID" value="NC_003869.1"/>
</dbReference>
<dbReference type="SMR" id="Q8R6V5"/>
<dbReference type="STRING" id="273068.TTE2679"/>
<dbReference type="KEGG" id="tte:TTE2679"/>
<dbReference type="eggNOG" id="COG0162">
    <property type="taxonomic scope" value="Bacteria"/>
</dbReference>
<dbReference type="HOGENOM" id="CLU_024003_0_3_9"/>
<dbReference type="OrthoDB" id="9804243at2"/>
<dbReference type="Proteomes" id="UP000000555">
    <property type="component" value="Chromosome"/>
</dbReference>
<dbReference type="GO" id="GO:0005829">
    <property type="term" value="C:cytosol"/>
    <property type="evidence" value="ECO:0007669"/>
    <property type="project" value="TreeGrafter"/>
</dbReference>
<dbReference type="GO" id="GO:0005524">
    <property type="term" value="F:ATP binding"/>
    <property type="evidence" value="ECO:0007669"/>
    <property type="project" value="UniProtKB-UniRule"/>
</dbReference>
<dbReference type="GO" id="GO:0003723">
    <property type="term" value="F:RNA binding"/>
    <property type="evidence" value="ECO:0007669"/>
    <property type="project" value="UniProtKB-KW"/>
</dbReference>
<dbReference type="GO" id="GO:0004831">
    <property type="term" value="F:tyrosine-tRNA ligase activity"/>
    <property type="evidence" value="ECO:0007669"/>
    <property type="project" value="UniProtKB-UniRule"/>
</dbReference>
<dbReference type="GO" id="GO:0006437">
    <property type="term" value="P:tyrosyl-tRNA aminoacylation"/>
    <property type="evidence" value="ECO:0007669"/>
    <property type="project" value="UniProtKB-UniRule"/>
</dbReference>
<dbReference type="CDD" id="cd00165">
    <property type="entry name" value="S4"/>
    <property type="match status" value="1"/>
</dbReference>
<dbReference type="CDD" id="cd00805">
    <property type="entry name" value="TyrRS_core"/>
    <property type="match status" value="1"/>
</dbReference>
<dbReference type="FunFam" id="1.10.240.10:FF:000001">
    <property type="entry name" value="Tyrosine--tRNA ligase"/>
    <property type="match status" value="1"/>
</dbReference>
<dbReference type="FunFam" id="3.40.50.620:FF:000008">
    <property type="entry name" value="Tyrosine--tRNA ligase"/>
    <property type="match status" value="1"/>
</dbReference>
<dbReference type="Gene3D" id="3.40.50.620">
    <property type="entry name" value="HUPs"/>
    <property type="match status" value="1"/>
</dbReference>
<dbReference type="Gene3D" id="3.10.290.10">
    <property type="entry name" value="RNA-binding S4 domain"/>
    <property type="match status" value="1"/>
</dbReference>
<dbReference type="Gene3D" id="1.10.240.10">
    <property type="entry name" value="Tyrosyl-Transfer RNA Synthetase"/>
    <property type="match status" value="1"/>
</dbReference>
<dbReference type="HAMAP" id="MF_02006">
    <property type="entry name" value="Tyr_tRNA_synth_type1"/>
    <property type="match status" value="1"/>
</dbReference>
<dbReference type="InterPro" id="IPR001412">
    <property type="entry name" value="aa-tRNA-synth_I_CS"/>
</dbReference>
<dbReference type="InterPro" id="IPR002305">
    <property type="entry name" value="aa-tRNA-synth_Ic"/>
</dbReference>
<dbReference type="InterPro" id="IPR014729">
    <property type="entry name" value="Rossmann-like_a/b/a_fold"/>
</dbReference>
<dbReference type="InterPro" id="IPR036986">
    <property type="entry name" value="S4_RNA-bd_sf"/>
</dbReference>
<dbReference type="InterPro" id="IPR054608">
    <property type="entry name" value="SYY-like_C"/>
</dbReference>
<dbReference type="InterPro" id="IPR002307">
    <property type="entry name" value="Tyr-tRNA-ligase"/>
</dbReference>
<dbReference type="InterPro" id="IPR024088">
    <property type="entry name" value="Tyr-tRNA-ligase_bac-type"/>
</dbReference>
<dbReference type="InterPro" id="IPR024107">
    <property type="entry name" value="Tyr-tRNA-ligase_bac_1"/>
</dbReference>
<dbReference type="NCBIfam" id="TIGR00234">
    <property type="entry name" value="tyrS"/>
    <property type="match status" value="1"/>
</dbReference>
<dbReference type="PANTHER" id="PTHR11766:SF0">
    <property type="entry name" value="TYROSINE--TRNA LIGASE, MITOCHONDRIAL"/>
    <property type="match status" value="1"/>
</dbReference>
<dbReference type="PANTHER" id="PTHR11766">
    <property type="entry name" value="TYROSYL-TRNA SYNTHETASE"/>
    <property type="match status" value="1"/>
</dbReference>
<dbReference type="Pfam" id="PF22421">
    <property type="entry name" value="SYY_C-terminal"/>
    <property type="match status" value="1"/>
</dbReference>
<dbReference type="Pfam" id="PF00579">
    <property type="entry name" value="tRNA-synt_1b"/>
    <property type="match status" value="1"/>
</dbReference>
<dbReference type="PRINTS" id="PR01040">
    <property type="entry name" value="TRNASYNTHTYR"/>
</dbReference>
<dbReference type="SUPFAM" id="SSF55174">
    <property type="entry name" value="Alpha-L RNA-binding motif"/>
    <property type="match status" value="1"/>
</dbReference>
<dbReference type="SUPFAM" id="SSF52374">
    <property type="entry name" value="Nucleotidylyl transferase"/>
    <property type="match status" value="1"/>
</dbReference>
<dbReference type="PROSITE" id="PS00178">
    <property type="entry name" value="AA_TRNA_LIGASE_I"/>
    <property type="match status" value="1"/>
</dbReference>
<dbReference type="PROSITE" id="PS50889">
    <property type="entry name" value="S4"/>
    <property type="match status" value="1"/>
</dbReference>
<organism>
    <name type="scientific">Caldanaerobacter subterraneus subsp. tengcongensis (strain DSM 15242 / JCM 11007 / NBRC 100824 / MB4)</name>
    <name type="common">Thermoanaerobacter tengcongensis</name>
    <dbReference type="NCBI Taxonomy" id="273068"/>
    <lineage>
        <taxon>Bacteria</taxon>
        <taxon>Bacillati</taxon>
        <taxon>Bacillota</taxon>
        <taxon>Clostridia</taxon>
        <taxon>Thermoanaerobacterales</taxon>
        <taxon>Thermoanaerobacteraceae</taxon>
        <taxon>Caldanaerobacter</taxon>
    </lineage>
</organism>
<gene>
    <name evidence="1" type="primary">tyrS</name>
    <name type="ordered locus">TTE2679</name>
</gene>
<keyword id="KW-0030">Aminoacyl-tRNA synthetase</keyword>
<keyword id="KW-0067">ATP-binding</keyword>
<keyword id="KW-0963">Cytoplasm</keyword>
<keyword id="KW-0436">Ligase</keyword>
<keyword id="KW-0547">Nucleotide-binding</keyword>
<keyword id="KW-0648">Protein biosynthesis</keyword>
<keyword id="KW-1185">Reference proteome</keyword>
<keyword id="KW-0694">RNA-binding</keyword>
<reference key="1">
    <citation type="journal article" date="2002" name="Genome Res.">
        <title>A complete sequence of the T. tengcongensis genome.</title>
        <authorList>
            <person name="Bao Q."/>
            <person name="Tian Y."/>
            <person name="Li W."/>
            <person name="Xu Z."/>
            <person name="Xuan Z."/>
            <person name="Hu S."/>
            <person name="Dong W."/>
            <person name="Yang J."/>
            <person name="Chen Y."/>
            <person name="Xue Y."/>
            <person name="Xu Y."/>
            <person name="Lai X."/>
            <person name="Huang L."/>
            <person name="Dong X."/>
            <person name="Ma Y."/>
            <person name="Ling L."/>
            <person name="Tan H."/>
            <person name="Chen R."/>
            <person name="Wang J."/>
            <person name="Yu J."/>
            <person name="Yang H."/>
        </authorList>
    </citation>
    <scope>NUCLEOTIDE SEQUENCE [LARGE SCALE GENOMIC DNA]</scope>
    <source>
        <strain>DSM 15242 / JCM 11007 / NBRC 100824 / MB4</strain>
    </source>
</reference>
<feature type="chain" id="PRO_0000234802" description="Tyrosine--tRNA ligase">
    <location>
        <begin position="1"/>
        <end position="406"/>
    </location>
</feature>
<feature type="domain" description="S4 RNA-binding" evidence="1">
    <location>
        <begin position="339"/>
        <end position="404"/>
    </location>
</feature>
<feature type="short sequence motif" description="'HIGH' region">
    <location>
        <begin position="39"/>
        <end position="48"/>
    </location>
</feature>
<feature type="short sequence motif" description="'KMSKS' region">
    <location>
        <begin position="227"/>
        <end position="231"/>
    </location>
</feature>
<feature type="binding site" evidence="1">
    <location>
        <position position="34"/>
    </location>
    <ligand>
        <name>L-tyrosine</name>
        <dbReference type="ChEBI" id="CHEBI:58315"/>
    </ligand>
</feature>
<feature type="binding site" evidence="1">
    <location>
        <position position="167"/>
    </location>
    <ligand>
        <name>L-tyrosine</name>
        <dbReference type="ChEBI" id="CHEBI:58315"/>
    </ligand>
</feature>
<feature type="binding site" evidence="1">
    <location>
        <position position="171"/>
    </location>
    <ligand>
        <name>L-tyrosine</name>
        <dbReference type="ChEBI" id="CHEBI:58315"/>
    </ligand>
</feature>
<feature type="binding site" evidence="1">
    <location>
        <position position="230"/>
    </location>
    <ligand>
        <name>ATP</name>
        <dbReference type="ChEBI" id="CHEBI:30616"/>
    </ligand>
</feature>
<evidence type="ECO:0000255" key="1">
    <source>
        <dbReference type="HAMAP-Rule" id="MF_02006"/>
    </source>
</evidence>
<sequence length="406" mass="46716">MSVLEVLKERGYIAQMTHEEEIEKLLEKEKITFYIGFDPTADSLHVGHLIQIMTMAHMQRAGHRPIVLLGGGTALIGDPSGRTDMRKMLTKEEIDRNAEAFKKQMERFIDFSEGKAIMENNAKWLLGLNYIEFLRDIGVHFTVNRMLEAEAFKTRMERGLTFLEFNYMLMQAYDFLELYRRYGCVMQMGGNDQWSNIIAGVELIRKKEGKQAYGMTFVLLTTSEGKKMGKTEKGAIWLDPKKTSPYEFYQYWRNIGDADVEKALALLTFLPMDEVRRLGRLRDKEINEAKKVLAFEVTKLVHGEEEALKAQKAAEALFEGGGEMEHVPSIEVSQDIIGRKIVDVLFEAKVIPSKSEGRRLIQQGGLYINDKRVENVDECIKEEMVKENAILVRKGKKEYHRLLVKE</sequence>
<proteinExistence type="inferred from homology"/>